<proteinExistence type="inferred from homology"/>
<keyword id="KW-0414">Isoprene biosynthesis</keyword>
<keyword id="KW-0460">Magnesium</keyword>
<keyword id="KW-0479">Metal-binding</keyword>
<keyword id="KW-1185">Reference proteome</keyword>
<keyword id="KW-0784">Thiamine biosynthesis</keyword>
<keyword id="KW-0786">Thiamine pyrophosphate</keyword>
<keyword id="KW-0808">Transferase</keyword>
<accession>Q1LK34</accession>
<dbReference type="EC" id="2.2.1.7" evidence="1"/>
<dbReference type="EMBL" id="CP000352">
    <property type="protein sequence ID" value="ABF09492.1"/>
    <property type="molecule type" value="Genomic_DNA"/>
</dbReference>
<dbReference type="RefSeq" id="WP_011517195.1">
    <property type="nucleotide sequence ID" value="NC_007973.1"/>
</dbReference>
<dbReference type="SMR" id="Q1LK34"/>
<dbReference type="STRING" id="266264.Rmet_2615"/>
<dbReference type="KEGG" id="rme:Rmet_2615"/>
<dbReference type="eggNOG" id="COG1154">
    <property type="taxonomic scope" value="Bacteria"/>
</dbReference>
<dbReference type="HOGENOM" id="CLU_009227_1_4_4"/>
<dbReference type="UniPathway" id="UPA00064">
    <property type="reaction ID" value="UER00091"/>
</dbReference>
<dbReference type="Proteomes" id="UP000002429">
    <property type="component" value="Chromosome"/>
</dbReference>
<dbReference type="GO" id="GO:0005829">
    <property type="term" value="C:cytosol"/>
    <property type="evidence" value="ECO:0007669"/>
    <property type="project" value="TreeGrafter"/>
</dbReference>
<dbReference type="GO" id="GO:0008661">
    <property type="term" value="F:1-deoxy-D-xylulose-5-phosphate synthase activity"/>
    <property type="evidence" value="ECO:0007669"/>
    <property type="project" value="UniProtKB-UniRule"/>
</dbReference>
<dbReference type="GO" id="GO:0000287">
    <property type="term" value="F:magnesium ion binding"/>
    <property type="evidence" value="ECO:0007669"/>
    <property type="project" value="UniProtKB-UniRule"/>
</dbReference>
<dbReference type="GO" id="GO:0030976">
    <property type="term" value="F:thiamine pyrophosphate binding"/>
    <property type="evidence" value="ECO:0007669"/>
    <property type="project" value="UniProtKB-UniRule"/>
</dbReference>
<dbReference type="GO" id="GO:0052865">
    <property type="term" value="P:1-deoxy-D-xylulose 5-phosphate biosynthetic process"/>
    <property type="evidence" value="ECO:0007669"/>
    <property type="project" value="UniProtKB-UniPathway"/>
</dbReference>
<dbReference type="GO" id="GO:0019288">
    <property type="term" value="P:isopentenyl diphosphate biosynthetic process, methylerythritol 4-phosphate pathway"/>
    <property type="evidence" value="ECO:0007669"/>
    <property type="project" value="TreeGrafter"/>
</dbReference>
<dbReference type="GO" id="GO:0016114">
    <property type="term" value="P:terpenoid biosynthetic process"/>
    <property type="evidence" value="ECO:0007669"/>
    <property type="project" value="UniProtKB-UniRule"/>
</dbReference>
<dbReference type="GO" id="GO:0009228">
    <property type="term" value="P:thiamine biosynthetic process"/>
    <property type="evidence" value="ECO:0007669"/>
    <property type="project" value="UniProtKB-UniRule"/>
</dbReference>
<dbReference type="CDD" id="cd02007">
    <property type="entry name" value="TPP_DXS"/>
    <property type="match status" value="1"/>
</dbReference>
<dbReference type="CDD" id="cd07033">
    <property type="entry name" value="TPP_PYR_DXS_TK_like"/>
    <property type="match status" value="1"/>
</dbReference>
<dbReference type="FunFam" id="3.40.50.920:FF:000002">
    <property type="entry name" value="1-deoxy-D-xylulose-5-phosphate synthase"/>
    <property type="match status" value="1"/>
</dbReference>
<dbReference type="FunFam" id="3.40.50.970:FF:000005">
    <property type="entry name" value="1-deoxy-D-xylulose-5-phosphate synthase"/>
    <property type="match status" value="1"/>
</dbReference>
<dbReference type="Gene3D" id="3.40.50.920">
    <property type="match status" value="1"/>
</dbReference>
<dbReference type="Gene3D" id="3.40.50.970">
    <property type="match status" value="2"/>
</dbReference>
<dbReference type="HAMAP" id="MF_00315">
    <property type="entry name" value="DXP_synth"/>
    <property type="match status" value="1"/>
</dbReference>
<dbReference type="InterPro" id="IPR005477">
    <property type="entry name" value="Dxylulose-5-P_synthase"/>
</dbReference>
<dbReference type="InterPro" id="IPR029061">
    <property type="entry name" value="THDP-binding"/>
</dbReference>
<dbReference type="InterPro" id="IPR009014">
    <property type="entry name" value="Transketo_C/PFOR_II"/>
</dbReference>
<dbReference type="InterPro" id="IPR005475">
    <property type="entry name" value="Transketolase-like_Pyr-bd"/>
</dbReference>
<dbReference type="InterPro" id="IPR020826">
    <property type="entry name" value="Transketolase_BS"/>
</dbReference>
<dbReference type="InterPro" id="IPR033248">
    <property type="entry name" value="Transketolase_C"/>
</dbReference>
<dbReference type="InterPro" id="IPR049557">
    <property type="entry name" value="Transketolase_CS"/>
</dbReference>
<dbReference type="NCBIfam" id="TIGR00204">
    <property type="entry name" value="dxs"/>
    <property type="match status" value="1"/>
</dbReference>
<dbReference type="NCBIfam" id="NF003933">
    <property type="entry name" value="PRK05444.2-2"/>
    <property type="match status" value="1"/>
</dbReference>
<dbReference type="PANTHER" id="PTHR43322">
    <property type="entry name" value="1-D-DEOXYXYLULOSE 5-PHOSPHATE SYNTHASE-RELATED"/>
    <property type="match status" value="1"/>
</dbReference>
<dbReference type="PANTHER" id="PTHR43322:SF5">
    <property type="entry name" value="1-DEOXY-D-XYLULOSE-5-PHOSPHATE SYNTHASE, CHLOROPLASTIC"/>
    <property type="match status" value="1"/>
</dbReference>
<dbReference type="Pfam" id="PF13292">
    <property type="entry name" value="DXP_synthase_N"/>
    <property type="match status" value="1"/>
</dbReference>
<dbReference type="Pfam" id="PF02779">
    <property type="entry name" value="Transket_pyr"/>
    <property type="match status" value="1"/>
</dbReference>
<dbReference type="Pfam" id="PF02780">
    <property type="entry name" value="Transketolase_C"/>
    <property type="match status" value="1"/>
</dbReference>
<dbReference type="SMART" id="SM00861">
    <property type="entry name" value="Transket_pyr"/>
    <property type="match status" value="1"/>
</dbReference>
<dbReference type="SUPFAM" id="SSF52518">
    <property type="entry name" value="Thiamin diphosphate-binding fold (THDP-binding)"/>
    <property type="match status" value="2"/>
</dbReference>
<dbReference type="SUPFAM" id="SSF52922">
    <property type="entry name" value="TK C-terminal domain-like"/>
    <property type="match status" value="1"/>
</dbReference>
<dbReference type="PROSITE" id="PS00801">
    <property type="entry name" value="TRANSKETOLASE_1"/>
    <property type="match status" value="1"/>
</dbReference>
<dbReference type="PROSITE" id="PS00802">
    <property type="entry name" value="TRANSKETOLASE_2"/>
    <property type="match status" value="1"/>
</dbReference>
<protein>
    <recommendedName>
        <fullName evidence="1">1-deoxy-D-xylulose-5-phosphate synthase</fullName>
        <ecNumber evidence="1">2.2.1.7</ecNumber>
    </recommendedName>
    <alternativeName>
        <fullName evidence="1">1-deoxyxylulose-5-phosphate synthase</fullName>
        <shortName evidence="1">DXP synthase</shortName>
        <shortName evidence="1">DXPS</shortName>
    </alternativeName>
</protein>
<sequence>MTYTLLNKIDDPADLRKLDRRQLDTLAEELRAYVLESVSQTGGHLSSNLGTVELTIALHYVFDTPNDRVVWDVGHQSYPHKILTGRRDRMSTLRQYGGISGFPRRAESEYDTFGTAHSSTSISAALGMALGARTRGEKRVGIAVIGDGAMTAGMAFEAMNNAGVYKDLPMLVVLNDNDMSISPPVGMLNKHLARLMSGQFYAATKKGIEKVLSVAPPVLEFAKRLEEHAKGMVVPATLFEEFGFDYVGPIDGHDLESLVPTLQNIRQRALEGHGPQFLHVVTKKGQGYKLAEADPILYHGPGKFNPAEGIRPSAKPSRKTYTQVFGEWLCDMAAADKRLIGVTPAMREGSGMVEFEKRFPDRYYDVGIAEQHAVTFAGGLACEGLKPVVAIYSTFLQRGYDQLIHDVALQNLPVVFALDRAGLVGADGATHAGVYDIPFLRCIPNMMVMVPADENECRQLLTTAFQQDCPTAVRYPRGAGVGVATQPELTALPVGKGEIRREGHARAGQRVAIMAFGSMVHPALTAAEQLDATVANMRFVKPLDVELVKQLAANHDFLVTVEEGATMGGAGSAVLEALAEAGIELPTLVLGLPDKFIDHGDPAHLLSLCGLDAAGIERSVRERFSLTAQPVKVASVA</sequence>
<reference key="1">
    <citation type="journal article" date="2010" name="PLoS ONE">
        <title>The complete genome sequence of Cupriavidus metallidurans strain CH34, a master survivalist in harsh and anthropogenic environments.</title>
        <authorList>
            <person name="Janssen P.J."/>
            <person name="Van Houdt R."/>
            <person name="Moors H."/>
            <person name="Monsieurs P."/>
            <person name="Morin N."/>
            <person name="Michaux A."/>
            <person name="Benotmane M.A."/>
            <person name="Leys N."/>
            <person name="Vallaeys T."/>
            <person name="Lapidus A."/>
            <person name="Monchy S."/>
            <person name="Medigue C."/>
            <person name="Taghavi S."/>
            <person name="McCorkle S."/>
            <person name="Dunn J."/>
            <person name="van der Lelie D."/>
            <person name="Mergeay M."/>
        </authorList>
    </citation>
    <scope>NUCLEOTIDE SEQUENCE [LARGE SCALE GENOMIC DNA]</scope>
    <source>
        <strain>ATCC 43123 / DSM 2839 / NBRC 102507 / CH34</strain>
    </source>
</reference>
<organism>
    <name type="scientific">Cupriavidus metallidurans (strain ATCC 43123 / DSM 2839 / NBRC 102507 / CH34)</name>
    <name type="common">Ralstonia metallidurans</name>
    <dbReference type="NCBI Taxonomy" id="266264"/>
    <lineage>
        <taxon>Bacteria</taxon>
        <taxon>Pseudomonadati</taxon>
        <taxon>Pseudomonadota</taxon>
        <taxon>Betaproteobacteria</taxon>
        <taxon>Burkholderiales</taxon>
        <taxon>Burkholderiaceae</taxon>
        <taxon>Cupriavidus</taxon>
    </lineage>
</organism>
<comment type="function">
    <text evidence="1">Catalyzes the acyloin condensation reaction between C atoms 2 and 3 of pyruvate and glyceraldehyde 3-phosphate to yield 1-deoxy-D-xylulose-5-phosphate (DXP).</text>
</comment>
<comment type="catalytic activity">
    <reaction evidence="1">
        <text>D-glyceraldehyde 3-phosphate + pyruvate + H(+) = 1-deoxy-D-xylulose 5-phosphate + CO2</text>
        <dbReference type="Rhea" id="RHEA:12605"/>
        <dbReference type="ChEBI" id="CHEBI:15361"/>
        <dbReference type="ChEBI" id="CHEBI:15378"/>
        <dbReference type="ChEBI" id="CHEBI:16526"/>
        <dbReference type="ChEBI" id="CHEBI:57792"/>
        <dbReference type="ChEBI" id="CHEBI:59776"/>
        <dbReference type="EC" id="2.2.1.7"/>
    </reaction>
</comment>
<comment type="cofactor">
    <cofactor evidence="1">
        <name>Mg(2+)</name>
        <dbReference type="ChEBI" id="CHEBI:18420"/>
    </cofactor>
    <text evidence="1">Binds 1 Mg(2+) ion per subunit.</text>
</comment>
<comment type="cofactor">
    <cofactor evidence="1">
        <name>thiamine diphosphate</name>
        <dbReference type="ChEBI" id="CHEBI:58937"/>
    </cofactor>
    <text evidence="1">Binds 1 thiamine pyrophosphate per subunit.</text>
</comment>
<comment type="pathway">
    <text evidence="1">Metabolic intermediate biosynthesis; 1-deoxy-D-xylulose 5-phosphate biosynthesis; 1-deoxy-D-xylulose 5-phosphate from D-glyceraldehyde 3-phosphate and pyruvate: step 1/1.</text>
</comment>
<comment type="subunit">
    <text evidence="1">Homodimer.</text>
</comment>
<comment type="similarity">
    <text evidence="1">Belongs to the transketolase family. DXPS subfamily.</text>
</comment>
<evidence type="ECO:0000255" key="1">
    <source>
        <dbReference type="HAMAP-Rule" id="MF_00315"/>
    </source>
</evidence>
<gene>
    <name evidence="1" type="primary">dxs</name>
    <name type="ordered locus">Rmet_2615</name>
</gene>
<feature type="chain" id="PRO_0000256466" description="1-deoxy-D-xylulose-5-phosphate synthase">
    <location>
        <begin position="1"/>
        <end position="637"/>
    </location>
</feature>
<feature type="binding site" evidence="1">
    <location>
        <position position="75"/>
    </location>
    <ligand>
        <name>thiamine diphosphate</name>
        <dbReference type="ChEBI" id="CHEBI:58937"/>
    </ligand>
</feature>
<feature type="binding site" evidence="1">
    <location>
        <begin position="116"/>
        <end position="118"/>
    </location>
    <ligand>
        <name>thiamine diphosphate</name>
        <dbReference type="ChEBI" id="CHEBI:58937"/>
    </ligand>
</feature>
<feature type="binding site" evidence="1">
    <location>
        <position position="147"/>
    </location>
    <ligand>
        <name>Mg(2+)</name>
        <dbReference type="ChEBI" id="CHEBI:18420"/>
    </ligand>
</feature>
<feature type="binding site" evidence="1">
    <location>
        <begin position="148"/>
        <end position="149"/>
    </location>
    <ligand>
        <name>thiamine diphosphate</name>
        <dbReference type="ChEBI" id="CHEBI:58937"/>
    </ligand>
</feature>
<feature type="binding site" evidence="1">
    <location>
        <position position="177"/>
    </location>
    <ligand>
        <name>Mg(2+)</name>
        <dbReference type="ChEBI" id="CHEBI:18420"/>
    </ligand>
</feature>
<feature type="binding site" evidence="1">
    <location>
        <position position="177"/>
    </location>
    <ligand>
        <name>thiamine diphosphate</name>
        <dbReference type="ChEBI" id="CHEBI:58937"/>
    </ligand>
</feature>
<feature type="binding site" evidence="1">
    <location>
        <position position="288"/>
    </location>
    <ligand>
        <name>thiamine diphosphate</name>
        <dbReference type="ChEBI" id="CHEBI:58937"/>
    </ligand>
</feature>
<feature type="binding site" evidence="1">
    <location>
        <position position="370"/>
    </location>
    <ligand>
        <name>thiamine diphosphate</name>
        <dbReference type="ChEBI" id="CHEBI:58937"/>
    </ligand>
</feature>
<name>DXS_CUPMC</name>